<name>KTHY_CHESB</name>
<evidence type="ECO:0000255" key="1">
    <source>
        <dbReference type="HAMAP-Rule" id="MF_00165"/>
    </source>
</evidence>
<gene>
    <name evidence="1" type="primary">tmk</name>
    <name type="ordered locus">Meso_1581</name>
</gene>
<proteinExistence type="inferred from homology"/>
<accession>Q11HZ9</accession>
<keyword id="KW-0067">ATP-binding</keyword>
<keyword id="KW-0418">Kinase</keyword>
<keyword id="KW-0545">Nucleotide biosynthesis</keyword>
<keyword id="KW-0547">Nucleotide-binding</keyword>
<keyword id="KW-0808">Transferase</keyword>
<comment type="function">
    <text evidence="1">Phosphorylation of dTMP to form dTDP in both de novo and salvage pathways of dTTP synthesis.</text>
</comment>
<comment type="catalytic activity">
    <reaction evidence="1">
        <text>dTMP + ATP = dTDP + ADP</text>
        <dbReference type="Rhea" id="RHEA:13517"/>
        <dbReference type="ChEBI" id="CHEBI:30616"/>
        <dbReference type="ChEBI" id="CHEBI:58369"/>
        <dbReference type="ChEBI" id="CHEBI:63528"/>
        <dbReference type="ChEBI" id="CHEBI:456216"/>
        <dbReference type="EC" id="2.7.4.9"/>
    </reaction>
</comment>
<comment type="similarity">
    <text evidence="1">Belongs to the thymidylate kinase family.</text>
</comment>
<protein>
    <recommendedName>
        <fullName evidence="1">Thymidylate kinase</fullName>
        <ecNumber evidence="1">2.7.4.9</ecNumber>
    </recommendedName>
    <alternativeName>
        <fullName evidence="1">dTMP kinase</fullName>
    </alternativeName>
</protein>
<organism>
    <name type="scientific">Chelativorans sp. (strain BNC1)</name>
    <dbReference type="NCBI Taxonomy" id="266779"/>
    <lineage>
        <taxon>Bacteria</taxon>
        <taxon>Pseudomonadati</taxon>
        <taxon>Pseudomonadota</taxon>
        <taxon>Alphaproteobacteria</taxon>
        <taxon>Hyphomicrobiales</taxon>
        <taxon>Phyllobacteriaceae</taxon>
        <taxon>Chelativorans</taxon>
    </lineage>
</organism>
<feature type="chain" id="PRO_1000203622" description="Thymidylate kinase">
    <location>
        <begin position="1"/>
        <end position="225"/>
    </location>
</feature>
<feature type="binding site" evidence="1">
    <location>
        <begin position="12"/>
        <end position="19"/>
    </location>
    <ligand>
        <name>ATP</name>
        <dbReference type="ChEBI" id="CHEBI:30616"/>
    </ligand>
</feature>
<reference key="1">
    <citation type="submission" date="2006-06" db="EMBL/GenBank/DDBJ databases">
        <title>Complete sequence of chromosome of Mesorhizobium sp. BNC1.</title>
        <authorList>
            <consortium name="US DOE Joint Genome Institute"/>
            <person name="Copeland A."/>
            <person name="Lucas S."/>
            <person name="Lapidus A."/>
            <person name="Barry K."/>
            <person name="Detter J.C."/>
            <person name="Glavina del Rio T."/>
            <person name="Hammon N."/>
            <person name="Israni S."/>
            <person name="Dalin E."/>
            <person name="Tice H."/>
            <person name="Pitluck S."/>
            <person name="Chertkov O."/>
            <person name="Brettin T."/>
            <person name="Bruce D."/>
            <person name="Han C."/>
            <person name="Tapia R."/>
            <person name="Gilna P."/>
            <person name="Schmutz J."/>
            <person name="Larimer F."/>
            <person name="Land M."/>
            <person name="Hauser L."/>
            <person name="Kyrpides N."/>
            <person name="Mikhailova N."/>
            <person name="Richardson P."/>
        </authorList>
    </citation>
    <scope>NUCLEOTIDE SEQUENCE [LARGE SCALE GENOMIC DNA]</scope>
    <source>
        <strain>BNC1</strain>
    </source>
</reference>
<dbReference type="EC" id="2.7.4.9" evidence="1"/>
<dbReference type="EMBL" id="CP000390">
    <property type="protein sequence ID" value="ABG62976.1"/>
    <property type="molecule type" value="Genomic_DNA"/>
</dbReference>
<dbReference type="SMR" id="Q11HZ9"/>
<dbReference type="STRING" id="266779.Meso_1581"/>
<dbReference type="KEGG" id="mes:Meso_1581"/>
<dbReference type="eggNOG" id="COG0125">
    <property type="taxonomic scope" value="Bacteria"/>
</dbReference>
<dbReference type="HOGENOM" id="CLU_049131_0_0_5"/>
<dbReference type="OrthoDB" id="9774907at2"/>
<dbReference type="GO" id="GO:0005829">
    <property type="term" value="C:cytosol"/>
    <property type="evidence" value="ECO:0007669"/>
    <property type="project" value="TreeGrafter"/>
</dbReference>
<dbReference type="GO" id="GO:0005524">
    <property type="term" value="F:ATP binding"/>
    <property type="evidence" value="ECO:0007669"/>
    <property type="project" value="UniProtKB-UniRule"/>
</dbReference>
<dbReference type="GO" id="GO:0004798">
    <property type="term" value="F:dTMP kinase activity"/>
    <property type="evidence" value="ECO:0007669"/>
    <property type="project" value="UniProtKB-UniRule"/>
</dbReference>
<dbReference type="GO" id="GO:0006233">
    <property type="term" value="P:dTDP biosynthetic process"/>
    <property type="evidence" value="ECO:0007669"/>
    <property type="project" value="InterPro"/>
</dbReference>
<dbReference type="GO" id="GO:0006235">
    <property type="term" value="P:dTTP biosynthetic process"/>
    <property type="evidence" value="ECO:0007669"/>
    <property type="project" value="UniProtKB-UniRule"/>
</dbReference>
<dbReference type="GO" id="GO:0006227">
    <property type="term" value="P:dUDP biosynthetic process"/>
    <property type="evidence" value="ECO:0007669"/>
    <property type="project" value="TreeGrafter"/>
</dbReference>
<dbReference type="CDD" id="cd01672">
    <property type="entry name" value="TMPK"/>
    <property type="match status" value="1"/>
</dbReference>
<dbReference type="FunFam" id="3.40.50.300:FF:000225">
    <property type="entry name" value="Thymidylate kinase"/>
    <property type="match status" value="1"/>
</dbReference>
<dbReference type="Gene3D" id="3.40.50.300">
    <property type="entry name" value="P-loop containing nucleotide triphosphate hydrolases"/>
    <property type="match status" value="1"/>
</dbReference>
<dbReference type="HAMAP" id="MF_00165">
    <property type="entry name" value="Thymidylate_kinase"/>
    <property type="match status" value="1"/>
</dbReference>
<dbReference type="InterPro" id="IPR027417">
    <property type="entry name" value="P-loop_NTPase"/>
</dbReference>
<dbReference type="InterPro" id="IPR039430">
    <property type="entry name" value="Thymidylate_kin-like_dom"/>
</dbReference>
<dbReference type="InterPro" id="IPR018095">
    <property type="entry name" value="Thymidylate_kin_CS"/>
</dbReference>
<dbReference type="InterPro" id="IPR018094">
    <property type="entry name" value="Thymidylate_kinase"/>
</dbReference>
<dbReference type="NCBIfam" id="TIGR00041">
    <property type="entry name" value="DTMP_kinase"/>
    <property type="match status" value="1"/>
</dbReference>
<dbReference type="PANTHER" id="PTHR10344">
    <property type="entry name" value="THYMIDYLATE KINASE"/>
    <property type="match status" value="1"/>
</dbReference>
<dbReference type="PANTHER" id="PTHR10344:SF4">
    <property type="entry name" value="UMP-CMP KINASE 2, MITOCHONDRIAL"/>
    <property type="match status" value="1"/>
</dbReference>
<dbReference type="Pfam" id="PF02223">
    <property type="entry name" value="Thymidylate_kin"/>
    <property type="match status" value="1"/>
</dbReference>
<dbReference type="SUPFAM" id="SSF52540">
    <property type="entry name" value="P-loop containing nucleoside triphosphate hydrolases"/>
    <property type="match status" value="1"/>
</dbReference>
<dbReference type="PROSITE" id="PS01331">
    <property type="entry name" value="THYMIDYLATE_KINASE"/>
    <property type="match status" value="1"/>
</dbReference>
<sequence>MVPRGFFITFEGGEGAGKSTQIHLLADRLRREGRDVLTTREPGGSPGAEAIRHVLLSGAAEPFGATLEAILFAAARSDHVEQVIRPAVESGAIVLCDRFLDSSRVYQGVTGGLASDFMAALERVTVNGLIPDLTVILDIDPEEGLRRASERRGKATADRFEKENLEIHRRRREAFLNIAAREPQRCVVIDASRSADAVSENVTEIVLRVIFDRAGLSEPTEAGSV</sequence>